<sequence length="240" mass="24624">MTVGKSSKMLQHIDYRMRCILQDGRIFIGTFKAFDKHMNLILCDCDEFRKIKPKNSKQAEREEKRVLGLVLLRGENLVSMTVEGPPPKDTGIARVPLAGAAGGPGIGRAAGRGIPAGVPMPQAPAGLAGPVRGVGGPSQQVMTPQGRGTVAAAAAAATASIAGAPTQYPPGRAGPPPPMGRGAPPPGMMGPPPGMRPPMGPPMGIPPGRGTPMGMPPPGMRPPPPGMRGPPPPGMRPPRP</sequence>
<proteinExistence type="evidence at transcript level"/>
<dbReference type="EMBL" id="BT021483">
    <property type="protein sequence ID" value="AAX46330.1"/>
    <property type="molecule type" value="mRNA"/>
</dbReference>
<dbReference type="RefSeq" id="NP_001029903.1">
    <property type="nucleotide sequence ID" value="NM_001034731.1"/>
</dbReference>
<dbReference type="SMR" id="Q58DW4"/>
<dbReference type="FunCoup" id="Q58DW4">
    <property type="interactions" value="2713"/>
</dbReference>
<dbReference type="PaxDb" id="9913-ENSBTAP00000001379"/>
<dbReference type="GeneID" id="613304"/>
<dbReference type="KEGG" id="bta:613304"/>
<dbReference type="CTD" id="6628"/>
<dbReference type="eggNOG" id="KOG3168">
    <property type="taxonomic scope" value="Eukaryota"/>
</dbReference>
<dbReference type="InParanoid" id="Q58DW4"/>
<dbReference type="OrthoDB" id="2020720at2759"/>
<dbReference type="Proteomes" id="UP000009136">
    <property type="component" value="Unplaced"/>
</dbReference>
<dbReference type="GO" id="GO:0071013">
    <property type="term" value="C:catalytic step 2 spliceosome"/>
    <property type="evidence" value="ECO:0000318"/>
    <property type="project" value="GO_Central"/>
</dbReference>
<dbReference type="GO" id="GO:0005737">
    <property type="term" value="C:cytoplasm"/>
    <property type="evidence" value="ECO:0000318"/>
    <property type="project" value="GO_Central"/>
</dbReference>
<dbReference type="GO" id="GO:0005829">
    <property type="term" value="C:cytosol"/>
    <property type="evidence" value="ECO:0000250"/>
    <property type="project" value="UniProtKB"/>
</dbReference>
<dbReference type="GO" id="GO:0034709">
    <property type="term" value="C:methylosome"/>
    <property type="evidence" value="ECO:0000250"/>
    <property type="project" value="UniProtKB"/>
</dbReference>
<dbReference type="GO" id="GO:0005634">
    <property type="term" value="C:nucleus"/>
    <property type="evidence" value="ECO:0000250"/>
    <property type="project" value="UniProtKB"/>
</dbReference>
<dbReference type="GO" id="GO:0034719">
    <property type="term" value="C:SMN-Sm protein complex"/>
    <property type="evidence" value="ECO:0000250"/>
    <property type="project" value="UniProtKB"/>
</dbReference>
<dbReference type="GO" id="GO:0005685">
    <property type="term" value="C:U1 snRNP"/>
    <property type="evidence" value="ECO:0000250"/>
    <property type="project" value="UniProtKB"/>
</dbReference>
<dbReference type="GO" id="GO:0005686">
    <property type="term" value="C:U2 snRNP"/>
    <property type="evidence" value="ECO:0000318"/>
    <property type="project" value="GO_Central"/>
</dbReference>
<dbReference type="GO" id="GO:0071007">
    <property type="term" value="C:U2-type catalytic step 2 spliceosome"/>
    <property type="evidence" value="ECO:0000250"/>
    <property type="project" value="UniProtKB"/>
</dbReference>
<dbReference type="GO" id="GO:0071005">
    <property type="term" value="C:U2-type precatalytic spliceosome"/>
    <property type="evidence" value="ECO:0000250"/>
    <property type="project" value="UniProtKB"/>
</dbReference>
<dbReference type="GO" id="GO:0071004">
    <property type="term" value="C:U2-type prespliceosome"/>
    <property type="evidence" value="ECO:0000318"/>
    <property type="project" value="GO_Central"/>
</dbReference>
<dbReference type="GO" id="GO:0005684">
    <property type="term" value="C:U2-type spliceosomal complex"/>
    <property type="evidence" value="ECO:0000250"/>
    <property type="project" value="UniProtKB"/>
</dbReference>
<dbReference type="GO" id="GO:0005687">
    <property type="term" value="C:U4 snRNP"/>
    <property type="evidence" value="ECO:0000250"/>
    <property type="project" value="UniProtKB"/>
</dbReference>
<dbReference type="GO" id="GO:0046540">
    <property type="term" value="C:U4/U6 x U5 tri-snRNP complex"/>
    <property type="evidence" value="ECO:0000250"/>
    <property type="project" value="UniProtKB"/>
</dbReference>
<dbReference type="GO" id="GO:0005682">
    <property type="term" value="C:U5 snRNP"/>
    <property type="evidence" value="ECO:0000318"/>
    <property type="project" value="GO_Central"/>
</dbReference>
<dbReference type="GO" id="GO:0005683">
    <property type="term" value="C:U7 snRNP"/>
    <property type="evidence" value="ECO:0000250"/>
    <property type="project" value="UniProtKB"/>
</dbReference>
<dbReference type="GO" id="GO:0003723">
    <property type="term" value="F:RNA binding"/>
    <property type="evidence" value="ECO:0007669"/>
    <property type="project" value="UniProtKB-KW"/>
</dbReference>
<dbReference type="GO" id="GO:0070990">
    <property type="term" value="F:snRNP binding"/>
    <property type="evidence" value="ECO:0000318"/>
    <property type="project" value="GO_Central"/>
</dbReference>
<dbReference type="GO" id="GO:0000398">
    <property type="term" value="P:mRNA splicing, via spliceosome"/>
    <property type="evidence" value="ECO:0000250"/>
    <property type="project" value="UniProtKB"/>
</dbReference>
<dbReference type="GO" id="GO:0000387">
    <property type="term" value="P:spliceosomal snRNP assembly"/>
    <property type="evidence" value="ECO:0000250"/>
    <property type="project" value="UniProtKB"/>
</dbReference>
<dbReference type="CDD" id="cd01717">
    <property type="entry name" value="Sm_B"/>
    <property type="match status" value="1"/>
</dbReference>
<dbReference type="FunFam" id="2.30.30.100:FF:000004">
    <property type="entry name" value="Small nuclear ribonucleoprotein-associated proteins"/>
    <property type="match status" value="1"/>
</dbReference>
<dbReference type="Gene3D" id="2.30.30.100">
    <property type="match status" value="1"/>
</dbReference>
<dbReference type="InterPro" id="IPR010920">
    <property type="entry name" value="LSM_dom_sf"/>
</dbReference>
<dbReference type="InterPro" id="IPR047575">
    <property type="entry name" value="Sm"/>
</dbReference>
<dbReference type="InterPro" id="IPR001163">
    <property type="entry name" value="Sm_dom_euk/arc"/>
</dbReference>
<dbReference type="InterPro" id="IPR017131">
    <property type="entry name" value="snRNP-assoc_SmB/SmN"/>
</dbReference>
<dbReference type="PANTHER" id="PTHR14508">
    <property type="entry name" value="SNRPN UPSTREAM READING FRAME PROTEIN, SNURF"/>
    <property type="match status" value="1"/>
</dbReference>
<dbReference type="PANTHER" id="PTHR14508:SF2">
    <property type="entry name" value="SNRPN UPSTREAM READING FRAME PROTEIN-RELATED"/>
    <property type="match status" value="1"/>
</dbReference>
<dbReference type="Pfam" id="PF01423">
    <property type="entry name" value="LSM"/>
    <property type="match status" value="1"/>
</dbReference>
<dbReference type="PIRSF" id="PIRSF037187">
    <property type="entry name" value="snRNP_SmB/SmN"/>
    <property type="match status" value="1"/>
</dbReference>
<dbReference type="SMART" id="SM00651">
    <property type="entry name" value="Sm"/>
    <property type="match status" value="1"/>
</dbReference>
<dbReference type="SUPFAM" id="SSF50182">
    <property type="entry name" value="Sm-like ribonucleoproteins"/>
    <property type="match status" value="1"/>
</dbReference>
<dbReference type="PROSITE" id="PS52002">
    <property type="entry name" value="SM"/>
    <property type="match status" value="1"/>
</dbReference>
<evidence type="ECO:0000250" key="1">
    <source>
        <dbReference type="UniProtKB" id="P14678"/>
    </source>
</evidence>
<evidence type="ECO:0000250" key="2">
    <source>
        <dbReference type="UniProtKB" id="P27048"/>
    </source>
</evidence>
<evidence type="ECO:0000250" key="3">
    <source>
        <dbReference type="UniProtKB" id="P63162"/>
    </source>
</evidence>
<evidence type="ECO:0000255" key="4">
    <source>
        <dbReference type="PROSITE-ProRule" id="PRU01346"/>
    </source>
</evidence>
<evidence type="ECO:0000256" key="5">
    <source>
        <dbReference type="SAM" id="MobiDB-lite"/>
    </source>
</evidence>
<evidence type="ECO:0000305" key="6"/>
<feature type="chain" id="PRO_0000249871" description="Small nuclear ribonucleoprotein-associated protein B'">
    <location>
        <begin position="1"/>
        <end position="240"/>
    </location>
</feature>
<feature type="domain" description="Sm" evidence="4">
    <location>
        <begin position="4"/>
        <end position="86"/>
    </location>
</feature>
<feature type="repeat">
    <location>
        <begin position="175"/>
        <end position="181"/>
    </location>
</feature>
<feature type="repeat">
    <location>
        <begin position="191"/>
        <end position="196"/>
    </location>
</feature>
<feature type="repeat">
    <location>
        <begin position="216"/>
        <end position="221"/>
    </location>
</feature>
<feature type="repeat">
    <location>
        <begin position="222"/>
        <end position="228"/>
    </location>
</feature>
<feature type="repeat">
    <location>
        <begin position="230"/>
        <end position="236"/>
    </location>
</feature>
<feature type="region of interest" description="Disordered" evidence="5">
    <location>
        <begin position="163"/>
        <end position="240"/>
    </location>
</feature>
<feature type="region of interest" description="Repeat-rich region">
    <location>
        <begin position="175"/>
        <end position="236"/>
    </location>
</feature>
<feature type="compositionally biased region" description="Pro residues" evidence="5">
    <location>
        <begin position="172"/>
        <end position="205"/>
    </location>
</feature>
<feature type="compositionally biased region" description="Pro residues" evidence="5">
    <location>
        <begin position="214"/>
        <end position="240"/>
    </location>
</feature>
<feature type="modified residue" description="Asymmetric dimethylarginine; alternate" evidence="1">
    <location>
        <position position="108"/>
    </location>
</feature>
<feature type="modified residue" description="Dimethylated arginine; alternate" evidence="1">
    <location>
        <position position="108"/>
    </location>
</feature>
<feature type="modified residue" description="Omega-N-methylarginine; alternate" evidence="1">
    <location>
        <position position="108"/>
    </location>
</feature>
<feature type="modified residue" description="Asymmetric dimethylarginine; alternate" evidence="1">
    <location>
        <position position="112"/>
    </location>
</feature>
<feature type="modified residue" description="Dimethylated arginine; alternate" evidence="1">
    <location>
        <position position="112"/>
    </location>
</feature>
<feature type="modified residue" description="Omega-N-methylarginine; alternate" evidence="1">
    <location>
        <position position="112"/>
    </location>
</feature>
<feature type="modified residue" description="Omega-N-methylarginine" evidence="1">
    <location>
        <position position="147"/>
    </location>
</feature>
<feature type="modified residue" description="Omega-N-methylarginine" evidence="3">
    <location>
        <position position="172"/>
    </location>
</feature>
<gene>
    <name type="primary">SNRPB</name>
</gene>
<reference key="1">
    <citation type="journal article" date="2005" name="BMC Genomics">
        <title>Characterization of 954 bovine full-CDS cDNA sequences.</title>
        <authorList>
            <person name="Harhay G.P."/>
            <person name="Sonstegard T.S."/>
            <person name="Keele J.W."/>
            <person name="Heaton M.P."/>
            <person name="Clawson M.L."/>
            <person name="Snelling W.M."/>
            <person name="Wiedmann R.T."/>
            <person name="Van Tassell C.P."/>
            <person name="Smith T.P.L."/>
        </authorList>
    </citation>
    <scope>NUCLEOTIDE SEQUENCE [LARGE SCALE MRNA]</scope>
</reference>
<comment type="function">
    <text evidence="1">Plays a role in pre-mRNA splicing as a core component of the spliceosomal U1, U2, U4 and U5 small nuclear ribonucleoproteins (snRNPs), the building blocks of the spliceosome (By similarity). Component of both the pre-catalytic spliceosome B complex and activated spliceosome C complexes (By similarity). As a component of the minor spliceosome, involved in the splicing of U12-type introns in pre-mRNAs (By similarity). As part of the U7 snRNP it is involved in histone pre-mRNA 3'-end processing (By similarity).</text>
</comment>
<comment type="subunit">
    <text evidence="1 2">Core component of the spliceosomal U1, U2, U4 and U5 small nuclear ribonucleoproteins (snRNPs), the building blocks of the spliceosome (By similarity). Most spliceosomal snRNPs contain a common set of Sm proteins, SNRPB, SNRPD1, SNRPD2, SNRPD3, SNRPE, SNRPF and SNRPG that assemble in a heptameric protein ring on the Sm site of the small nuclear RNA to form the core snRNP (By similarity). Component of the U1 snRNP (By similarity). The U1 snRNP is composed of the U1 snRNA and the 7 core Sm proteins SNRPB, SNRPD1, SNRPD2, SNRPD3, SNRPE, SNRPF and SNRPG, and at least three U1 snRNP-specific proteins SNRNP70/U1-70K, SNRPA/U1-A and SNRPC/U1-C (By similarity). Component of the U4/U6-U5 tri-snRNP complex composed of the U4, U6 and U5 snRNAs and at least PRPF3, PRPF4, PRPF6, PRPF8, PRPF31, SNRNP200, TXNL4A, SNRNP40, SNRPB, SNRPD1, SNRPD2, SNRPD3, SNRPE, SNRPF, SNRPG, DDX23, CD2BP2, PPIH, SNU13, EFTUD2, SART1 and USP39, plus LSM2, LSM3, LSM4, LSM5, LSM6, LSM7 and LSM8 (By similarity). Component of the U7 snRNP complex, or U7 Sm protein core complex, that is composed of the U7 snRNA and at least LSM10, LSM11, SNRPB, SNRPD3, SNRPE, SNRPF and SNRPG; the complex does not contain SNRPD1 and SNRPD2 (By similarity). Component of the minor spliceosome, which splices U12-type introns (By similarity). Part of the SMN-Sm complex that contains SMN1, GEMIN2/SIP1, DDX20/GEMIN3, GEMIN4, GEMIN5, GEMIN6, GEMIN7, GEMIN8, STRAP/UNRIP and the Sm proteins SNRPB, SNRPD1, SNRPD2, SNRPD3, SNRPE, SNRPF and SNRPG; catalyzes core snRNPs assembly (By similarity). Forms a 6S pICln-Sm complex composed of CLNS1A/pICln, SNRPD1, SNRPD2, SNRPE, SNRPF and SNRPG; ring-like structure where CLNS1A/pICln mimics additional Sm proteins and which is unable to assemble into the core snRNP (By similarity). Identified in a histone pre-mRNA complex, at least composed of ERI1, LSM11, SLBP, SNRPB, SYNCRIP and YBX1 (By similarity). Interacts with TDRD3 and SNUPN (By similarity). Interacts with PRMT5; interaction leads to its symmetric arginine dimethylation (By similarity). Interacts with TDRD6; interaction promotes association with PRMT5 (By similarity). Interacts with SMN1; the interaction is direct (By similarity).</text>
</comment>
<comment type="subcellular location">
    <subcellularLocation>
        <location evidence="1">Cytoplasm</location>
        <location evidence="1">Cytosol</location>
    </subcellularLocation>
    <subcellularLocation>
        <location evidence="1">Nucleus</location>
    </subcellularLocation>
    <text evidence="1">SMN-mediated assembly into core snRNPs occurs in the cytosol before SMN-mediated transport to the nucleus to be included in spliceosomes.</text>
</comment>
<comment type="PTM">
    <text evidence="1 2">Methylated by PRMT5 (By similarity). Arg-108 and Arg-112 are dimethylated, probably to asymmetric dimethylarginine (By similarity).</text>
</comment>
<comment type="similarity">
    <text evidence="6">Belongs to the snRNP SmB/SmN family.</text>
</comment>
<keyword id="KW-0963">Cytoplasm</keyword>
<keyword id="KW-0488">Methylation</keyword>
<keyword id="KW-0507">mRNA processing</keyword>
<keyword id="KW-0508">mRNA splicing</keyword>
<keyword id="KW-0539">Nucleus</keyword>
<keyword id="KW-1185">Reference proteome</keyword>
<keyword id="KW-0677">Repeat</keyword>
<keyword id="KW-0687">Ribonucleoprotein</keyword>
<keyword id="KW-0694">RNA-binding</keyword>
<keyword id="KW-0747">Spliceosome</keyword>
<protein>
    <recommendedName>
        <fullName>Small nuclear ribonucleoprotein-associated protein B'</fullName>
        <shortName>snRNP-B'</shortName>
        <shortName>snRPB'</shortName>
    </recommendedName>
    <alternativeName>
        <fullName>Sm protein B'</fullName>
        <shortName>Sm-B'</shortName>
        <shortName>SmB'</shortName>
    </alternativeName>
</protein>
<organism>
    <name type="scientific">Bos taurus</name>
    <name type="common">Bovine</name>
    <dbReference type="NCBI Taxonomy" id="9913"/>
    <lineage>
        <taxon>Eukaryota</taxon>
        <taxon>Metazoa</taxon>
        <taxon>Chordata</taxon>
        <taxon>Craniata</taxon>
        <taxon>Vertebrata</taxon>
        <taxon>Euteleostomi</taxon>
        <taxon>Mammalia</taxon>
        <taxon>Eutheria</taxon>
        <taxon>Laurasiatheria</taxon>
        <taxon>Artiodactyla</taxon>
        <taxon>Ruminantia</taxon>
        <taxon>Pecora</taxon>
        <taxon>Bovidae</taxon>
        <taxon>Bovinae</taxon>
        <taxon>Bos</taxon>
    </lineage>
</organism>
<accession>Q58DW4</accession>
<name>RSMB_BOVIN</name>